<reference key="1">
    <citation type="submission" date="1995-01" db="EMBL/GenBank/DDBJ databases">
        <title>Sequence of a 37 kb DNA fragment from chromosome XII of Saccharomyces cerevisiae including the subtelomeric region of the left arm.</title>
        <authorList>
            <person name="Wedler H."/>
            <person name="Wambutt R."/>
        </authorList>
    </citation>
    <scope>NUCLEOTIDE SEQUENCE [GENOMIC DNA]</scope>
    <source>
        <strain>ATCC 204511 / S288c / AB972</strain>
    </source>
</reference>
<reference key="2">
    <citation type="journal article" date="1997" name="Nature">
        <title>The nucleotide sequence of Saccharomyces cerevisiae chromosome XII.</title>
        <authorList>
            <person name="Johnston M."/>
            <person name="Hillier L.W."/>
            <person name="Riles L."/>
            <person name="Albermann K."/>
            <person name="Andre B."/>
            <person name="Ansorge W."/>
            <person name="Benes V."/>
            <person name="Brueckner M."/>
            <person name="Delius H."/>
            <person name="Dubois E."/>
            <person name="Duesterhoeft A."/>
            <person name="Entian K.-D."/>
            <person name="Floeth M."/>
            <person name="Goffeau A."/>
            <person name="Hebling U."/>
            <person name="Heumann K."/>
            <person name="Heuss-Neitzel D."/>
            <person name="Hilbert H."/>
            <person name="Hilger F."/>
            <person name="Kleine K."/>
            <person name="Koetter P."/>
            <person name="Louis E.J."/>
            <person name="Messenguy F."/>
            <person name="Mewes H.-W."/>
            <person name="Miosga T."/>
            <person name="Moestl D."/>
            <person name="Mueller-Auer S."/>
            <person name="Nentwich U."/>
            <person name="Obermaier B."/>
            <person name="Piravandi E."/>
            <person name="Pohl T.M."/>
            <person name="Portetelle D."/>
            <person name="Purnelle B."/>
            <person name="Rechmann S."/>
            <person name="Rieger M."/>
            <person name="Rinke M."/>
            <person name="Rose M."/>
            <person name="Scharfe M."/>
            <person name="Scherens B."/>
            <person name="Scholler P."/>
            <person name="Schwager C."/>
            <person name="Schwarz S."/>
            <person name="Underwood A.P."/>
            <person name="Urrestarazu L.A."/>
            <person name="Vandenbol M."/>
            <person name="Verhasselt P."/>
            <person name="Vierendeels F."/>
            <person name="Voet M."/>
            <person name="Volckaert G."/>
            <person name="Voss H."/>
            <person name="Wambutt R."/>
            <person name="Wedler E."/>
            <person name="Wedler H."/>
            <person name="Zimmermann F.K."/>
            <person name="Zollner A."/>
            <person name="Hani J."/>
            <person name="Hoheisel J.D."/>
        </authorList>
    </citation>
    <scope>NUCLEOTIDE SEQUENCE [LARGE SCALE GENOMIC DNA]</scope>
    <source>
        <strain>ATCC 204508 / S288c</strain>
    </source>
</reference>
<reference key="3">
    <citation type="journal article" date="2014" name="G3 (Bethesda)">
        <title>The reference genome sequence of Saccharomyces cerevisiae: Then and now.</title>
        <authorList>
            <person name="Engel S.R."/>
            <person name="Dietrich F.S."/>
            <person name="Fisk D.G."/>
            <person name="Binkley G."/>
            <person name="Balakrishnan R."/>
            <person name="Costanzo M.C."/>
            <person name="Dwight S.S."/>
            <person name="Hitz B.C."/>
            <person name="Karra K."/>
            <person name="Nash R.S."/>
            <person name="Weng S."/>
            <person name="Wong E.D."/>
            <person name="Lloyd P."/>
            <person name="Skrzypek M.S."/>
            <person name="Miyasato S.R."/>
            <person name="Simison M."/>
            <person name="Cherry J.M."/>
        </authorList>
    </citation>
    <scope>GENOME REANNOTATION</scope>
    <source>
        <strain>ATCC 204508 / S288c</strain>
    </source>
</reference>
<evidence type="ECO:0000305" key="1"/>
<evidence type="ECO:0000305" key="2">
    <source>
    </source>
</evidence>
<accession>Q99339</accession>
<accession>E9PAG5</accession>
<organism>
    <name type="scientific">Saccharomyces cerevisiae (strain ATCC 204508 / S288c)</name>
    <name type="common">Baker's yeast</name>
    <dbReference type="NCBI Taxonomy" id="559292"/>
    <lineage>
        <taxon>Eukaryota</taxon>
        <taxon>Fungi</taxon>
        <taxon>Dikarya</taxon>
        <taxon>Ascomycota</taxon>
        <taxon>Saccharomycotina</taxon>
        <taxon>Saccharomycetes</taxon>
        <taxon>Saccharomycetales</taxon>
        <taxon>Saccharomycetaceae</taxon>
        <taxon>Saccharomyces</taxon>
    </lineage>
</organism>
<comment type="miscellaneous">
    <text evidence="1">Contained within a telomeric X element core sequence.</text>
</comment>
<comment type="similarity">
    <text evidence="1">Belongs to the UPF0320 family.</text>
</comment>
<comment type="caution">
    <text evidence="2">Product of a dubious gene prediction unlikely to encode a functional protein. Because of that it is not part of the S.cerevisiae S288c complete/reference proteome set.</text>
</comment>
<dbReference type="EMBL" id="Z47973">
    <property type="protein sequence ID" value="CAA87992.1"/>
    <property type="molecule type" value="Genomic_DNA"/>
</dbReference>
<dbReference type="EMBL" id="Z73169">
    <property type="protein sequence ID" value="CAA97518.2"/>
    <property type="molecule type" value="Genomic_DNA"/>
</dbReference>
<dbReference type="EMBL" id="Z73170">
    <property type="protein sequence ID" value="CAA97519.1"/>
    <property type="molecule type" value="Genomic_DNA"/>
</dbReference>
<dbReference type="PIR" id="S50955">
    <property type="entry name" value="S50955"/>
</dbReference>
<dbReference type="DIP" id="DIP-5085N"/>
<dbReference type="IntAct" id="Q99339">
    <property type="interactions" value="1"/>
</dbReference>
<dbReference type="STRING" id="4932.YLL065W"/>
<dbReference type="PaxDb" id="4932-YLL065W"/>
<dbReference type="EnsemblFungi" id="YLL065W_mRNA">
    <property type="protein sequence ID" value="YLL065W"/>
    <property type="gene ID" value="YLL065W"/>
</dbReference>
<dbReference type="AGR" id="SGD:S000003988"/>
<dbReference type="SGD" id="S000003988">
    <property type="gene designation" value="YLL065W"/>
</dbReference>
<dbReference type="GeneTree" id="ENSGT00940000177535"/>
<dbReference type="HOGENOM" id="CLU_164954_0_0_1"/>
<dbReference type="InterPro" id="IPR007414">
    <property type="entry name" value="DUF468"/>
</dbReference>
<dbReference type="Pfam" id="PF04318">
    <property type="entry name" value="DUF468"/>
    <property type="match status" value="1"/>
</dbReference>
<gene>
    <name type="ordered locus">YLL065W</name>
    <name type="ORF">L0536</name>
</gene>
<protein>
    <recommendedName>
        <fullName>Putative UPF0320 protein YLL065W</fullName>
    </recommendedName>
    <alternativeName>
        <fullName>Growth inhibitory protein 11</fullName>
        <shortName>GIN11</shortName>
    </alternativeName>
</protein>
<sequence length="116" mass="13487">MLQYIPLSNLPYSHIPLHHPSLTISTKCTRIIMHGTCLSGLYPVPFTHKVHHYPHFNIYISFGDPKYCITALNTYVIPLLHHILTTQFIHTYFNIPTKSPPKSPKHKNYLSFNFTK</sequence>
<feature type="chain" id="PRO_0000211376" description="Putative UPF0320 protein YLL065W">
    <location>
        <begin position="1"/>
        <end position="116"/>
    </location>
</feature>
<name>GIN11_YEAST</name>
<proteinExistence type="uncertain"/>